<accession>B2I848</accession>
<name>SYK_XYLF2</name>
<sequence>MTEHLPASQVSFDENALIAERRAKLLALRAQGVAYPNDVKREHYAADVQAAFANVETWTAETLEASSHRVRMAGRLMAKRLMGKASFAQIQDESGRIQLLIQSNVLGEDSYAAFKVLDVGDIIAVEGGLTRTRTGELSVKVNVLRLLTKALRPLPDKWHGLTDVEQRYRQRYVDLIVTPESREIFIKRSKIIRALRTWLDARLFLEVETPMMHYIPGGAAAKPFVTYHNALDLELYLRVAPELYLKRLVVGGLERVYEINRNFRNEGVSTRHNPEFTMLELYEAYSTYHEVMDLAETMIRDTAQSVLGTTQVIWDGAQIDLGPIFRRWRMDEAVCHHNPEMSVAECTDRDALLLHCERLKIKVKSSYGWGRLLLSIFEATVEHTLIQPTFITDHPVEISPLARESDIESGYTDRFELFINGKEIANGFSELNDPEEQAMRFQKQVEAKEGGDDEAMYYDADYIRALEYGMAPTGGLGIGVDRLVMLLTGSTSIRDVLLFPYMRPER</sequence>
<proteinExistence type="inferred from homology"/>
<comment type="catalytic activity">
    <reaction evidence="1">
        <text>tRNA(Lys) + L-lysine + ATP = L-lysyl-tRNA(Lys) + AMP + diphosphate</text>
        <dbReference type="Rhea" id="RHEA:20792"/>
        <dbReference type="Rhea" id="RHEA-COMP:9696"/>
        <dbReference type="Rhea" id="RHEA-COMP:9697"/>
        <dbReference type="ChEBI" id="CHEBI:30616"/>
        <dbReference type="ChEBI" id="CHEBI:32551"/>
        <dbReference type="ChEBI" id="CHEBI:33019"/>
        <dbReference type="ChEBI" id="CHEBI:78442"/>
        <dbReference type="ChEBI" id="CHEBI:78529"/>
        <dbReference type="ChEBI" id="CHEBI:456215"/>
        <dbReference type="EC" id="6.1.1.6"/>
    </reaction>
</comment>
<comment type="cofactor">
    <cofactor evidence="1">
        <name>Mg(2+)</name>
        <dbReference type="ChEBI" id="CHEBI:18420"/>
    </cofactor>
    <text evidence="1">Binds 3 Mg(2+) ions per subunit.</text>
</comment>
<comment type="subunit">
    <text evidence="1">Homodimer.</text>
</comment>
<comment type="subcellular location">
    <subcellularLocation>
        <location evidence="1">Cytoplasm</location>
    </subcellularLocation>
</comment>
<comment type="similarity">
    <text evidence="1">Belongs to the class-II aminoacyl-tRNA synthetase family.</text>
</comment>
<protein>
    <recommendedName>
        <fullName evidence="1">Lysine--tRNA ligase</fullName>
        <ecNumber evidence="1">6.1.1.6</ecNumber>
    </recommendedName>
    <alternativeName>
        <fullName evidence="1">Lysyl-tRNA synthetase</fullName>
        <shortName evidence="1">LysRS</shortName>
    </alternativeName>
</protein>
<feature type="chain" id="PRO_1000101161" description="Lysine--tRNA ligase">
    <location>
        <begin position="1"/>
        <end position="506"/>
    </location>
</feature>
<feature type="binding site" evidence="1">
    <location>
        <position position="416"/>
    </location>
    <ligand>
        <name>Mg(2+)</name>
        <dbReference type="ChEBI" id="CHEBI:18420"/>
        <label>1</label>
    </ligand>
</feature>
<feature type="binding site" evidence="1">
    <location>
        <position position="423"/>
    </location>
    <ligand>
        <name>Mg(2+)</name>
        <dbReference type="ChEBI" id="CHEBI:18420"/>
        <label>1</label>
    </ligand>
</feature>
<feature type="binding site" evidence="1">
    <location>
        <position position="423"/>
    </location>
    <ligand>
        <name>Mg(2+)</name>
        <dbReference type="ChEBI" id="CHEBI:18420"/>
        <label>2</label>
    </ligand>
</feature>
<gene>
    <name evidence="1" type="primary">lysS</name>
    <name type="ordered locus">XfasM23_0398</name>
</gene>
<evidence type="ECO:0000255" key="1">
    <source>
        <dbReference type="HAMAP-Rule" id="MF_00252"/>
    </source>
</evidence>
<organism>
    <name type="scientific">Xylella fastidiosa (strain M23)</name>
    <dbReference type="NCBI Taxonomy" id="405441"/>
    <lineage>
        <taxon>Bacteria</taxon>
        <taxon>Pseudomonadati</taxon>
        <taxon>Pseudomonadota</taxon>
        <taxon>Gammaproteobacteria</taxon>
        <taxon>Lysobacterales</taxon>
        <taxon>Lysobacteraceae</taxon>
        <taxon>Xylella</taxon>
    </lineage>
</organism>
<reference key="1">
    <citation type="journal article" date="2010" name="J. Bacteriol.">
        <title>Whole genome sequences of two Xylella fastidiosa strains (M12 and M23) causing almond leaf scorch disease in California.</title>
        <authorList>
            <person name="Chen J."/>
            <person name="Xie G."/>
            <person name="Han S."/>
            <person name="Chertkov O."/>
            <person name="Sims D."/>
            <person name="Civerolo E.L."/>
        </authorList>
    </citation>
    <scope>NUCLEOTIDE SEQUENCE [LARGE SCALE GENOMIC DNA]</scope>
    <source>
        <strain>M23</strain>
    </source>
</reference>
<keyword id="KW-0030">Aminoacyl-tRNA synthetase</keyword>
<keyword id="KW-0067">ATP-binding</keyword>
<keyword id="KW-0963">Cytoplasm</keyword>
<keyword id="KW-0436">Ligase</keyword>
<keyword id="KW-0460">Magnesium</keyword>
<keyword id="KW-0479">Metal-binding</keyword>
<keyword id="KW-0547">Nucleotide-binding</keyword>
<keyword id="KW-0648">Protein biosynthesis</keyword>
<dbReference type="EC" id="6.1.1.6" evidence="1"/>
<dbReference type="EMBL" id="CP001011">
    <property type="protein sequence ID" value="ACB91846.1"/>
    <property type="molecule type" value="Genomic_DNA"/>
</dbReference>
<dbReference type="RefSeq" id="WP_004090013.1">
    <property type="nucleotide sequence ID" value="NC_010577.1"/>
</dbReference>
<dbReference type="SMR" id="B2I848"/>
<dbReference type="GeneID" id="93904105"/>
<dbReference type="KEGG" id="xfn:XfasM23_0398"/>
<dbReference type="HOGENOM" id="CLU_008255_6_0_6"/>
<dbReference type="Proteomes" id="UP000001698">
    <property type="component" value="Chromosome"/>
</dbReference>
<dbReference type="GO" id="GO:0005829">
    <property type="term" value="C:cytosol"/>
    <property type="evidence" value="ECO:0007669"/>
    <property type="project" value="TreeGrafter"/>
</dbReference>
<dbReference type="GO" id="GO:0005524">
    <property type="term" value="F:ATP binding"/>
    <property type="evidence" value="ECO:0007669"/>
    <property type="project" value="UniProtKB-UniRule"/>
</dbReference>
<dbReference type="GO" id="GO:0004824">
    <property type="term" value="F:lysine-tRNA ligase activity"/>
    <property type="evidence" value="ECO:0007669"/>
    <property type="project" value="UniProtKB-UniRule"/>
</dbReference>
<dbReference type="GO" id="GO:0000287">
    <property type="term" value="F:magnesium ion binding"/>
    <property type="evidence" value="ECO:0007669"/>
    <property type="project" value="UniProtKB-UniRule"/>
</dbReference>
<dbReference type="GO" id="GO:0000049">
    <property type="term" value="F:tRNA binding"/>
    <property type="evidence" value="ECO:0007669"/>
    <property type="project" value="TreeGrafter"/>
</dbReference>
<dbReference type="GO" id="GO:0006430">
    <property type="term" value="P:lysyl-tRNA aminoacylation"/>
    <property type="evidence" value="ECO:0007669"/>
    <property type="project" value="UniProtKB-UniRule"/>
</dbReference>
<dbReference type="CDD" id="cd00775">
    <property type="entry name" value="LysRS_core"/>
    <property type="match status" value="1"/>
</dbReference>
<dbReference type="CDD" id="cd04322">
    <property type="entry name" value="LysRS_N"/>
    <property type="match status" value="1"/>
</dbReference>
<dbReference type="FunFam" id="2.40.50.140:FF:000024">
    <property type="entry name" value="Lysine--tRNA ligase"/>
    <property type="match status" value="1"/>
</dbReference>
<dbReference type="FunFam" id="3.30.930.10:FF:000001">
    <property type="entry name" value="Lysine--tRNA ligase"/>
    <property type="match status" value="1"/>
</dbReference>
<dbReference type="Gene3D" id="3.30.930.10">
    <property type="entry name" value="Bira Bifunctional Protein, Domain 2"/>
    <property type="match status" value="1"/>
</dbReference>
<dbReference type="Gene3D" id="2.40.50.140">
    <property type="entry name" value="Nucleic acid-binding proteins"/>
    <property type="match status" value="1"/>
</dbReference>
<dbReference type="HAMAP" id="MF_00252">
    <property type="entry name" value="Lys_tRNA_synth_class2"/>
    <property type="match status" value="1"/>
</dbReference>
<dbReference type="InterPro" id="IPR004364">
    <property type="entry name" value="Aa-tRNA-synt_II"/>
</dbReference>
<dbReference type="InterPro" id="IPR006195">
    <property type="entry name" value="aa-tRNA-synth_II"/>
</dbReference>
<dbReference type="InterPro" id="IPR045864">
    <property type="entry name" value="aa-tRNA-synth_II/BPL/LPL"/>
</dbReference>
<dbReference type="InterPro" id="IPR002313">
    <property type="entry name" value="Lys-tRNA-ligase_II"/>
</dbReference>
<dbReference type="InterPro" id="IPR044136">
    <property type="entry name" value="Lys-tRNA-ligase_II_N"/>
</dbReference>
<dbReference type="InterPro" id="IPR018149">
    <property type="entry name" value="Lys-tRNA-synth_II_C"/>
</dbReference>
<dbReference type="InterPro" id="IPR012340">
    <property type="entry name" value="NA-bd_OB-fold"/>
</dbReference>
<dbReference type="InterPro" id="IPR004365">
    <property type="entry name" value="NA-bd_OB_tRNA"/>
</dbReference>
<dbReference type="NCBIfam" id="TIGR00499">
    <property type="entry name" value="lysS_bact"/>
    <property type="match status" value="1"/>
</dbReference>
<dbReference type="NCBIfam" id="NF001756">
    <property type="entry name" value="PRK00484.1"/>
    <property type="match status" value="1"/>
</dbReference>
<dbReference type="PANTHER" id="PTHR42918:SF15">
    <property type="entry name" value="LYSINE--TRNA LIGASE, CHLOROPLASTIC_MITOCHONDRIAL"/>
    <property type="match status" value="1"/>
</dbReference>
<dbReference type="PANTHER" id="PTHR42918">
    <property type="entry name" value="LYSYL-TRNA SYNTHETASE"/>
    <property type="match status" value="1"/>
</dbReference>
<dbReference type="Pfam" id="PF00152">
    <property type="entry name" value="tRNA-synt_2"/>
    <property type="match status" value="1"/>
</dbReference>
<dbReference type="Pfam" id="PF01336">
    <property type="entry name" value="tRNA_anti-codon"/>
    <property type="match status" value="1"/>
</dbReference>
<dbReference type="PRINTS" id="PR00982">
    <property type="entry name" value="TRNASYNTHLYS"/>
</dbReference>
<dbReference type="SUPFAM" id="SSF55681">
    <property type="entry name" value="Class II aaRS and biotin synthetases"/>
    <property type="match status" value="1"/>
</dbReference>
<dbReference type="SUPFAM" id="SSF50249">
    <property type="entry name" value="Nucleic acid-binding proteins"/>
    <property type="match status" value="1"/>
</dbReference>
<dbReference type="PROSITE" id="PS50862">
    <property type="entry name" value="AA_TRNA_LIGASE_II"/>
    <property type="match status" value="1"/>
</dbReference>